<dbReference type="EC" id="3.1.1.1" evidence="1"/>
<dbReference type="EMBL" id="AM286415">
    <property type="protein sequence ID" value="CAL13236.1"/>
    <property type="molecule type" value="Genomic_DNA"/>
</dbReference>
<dbReference type="RefSeq" id="WP_011816927.1">
    <property type="nucleotide sequence ID" value="NC_008800.1"/>
</dbReference>
<dbReference type="RefSeq" id="YP_001007380.1">
    <property type="nucleotide sequence ID" value="NC_008800.1"/>
</dbReference>
<dbReference type="SMR" id="A1JNX9"/>
<dbReference type="ESTHER" id="yere8-y3204">
    <property type="family name" value="Duf_1100-R"/>
</dbReference>
<dbReference type="KEGG" id="yen:YE3204"/>
<dbReference type="PATRIC" id="fig|393305.7.peg.3407"/>
<dbReference type="eggNOG" id="COG1073">
    <property type="taxonomic scope" value="Bacteria"/>
</dbReference>
<dbReference type="HOGENOM" id="CLU_036819_0_0_6"/>
<dbReference type="OrthoDB" id="5590073at2"/>
<dbReference type="Proteomes" id="UP000000642">
    <property type="component" value="Chromosome"/>
</dbReference>
<dbReference type="GO" id="GO:0106435">
    <property type="term" value="F:carboxylesterase activity"/>
    <property type="evidence" value="ECO:0007669"/>
    <property type="project" value="UniProtKB-EC"/>
</dbReference>
<dbReference type="Gene3D" id="3.40.50.1820">
    <property type="entry name" value="alpha/beta hydrolase"/>
    <property type="match status" value="1"/>
</dbReference>
<dbReference type="HAMAP" id="MF_01063">
    <property type="entry name" value="FrsA"/>
    <property type="match status" value="1"/>
</dbReference>
<dbReference type="InterPro" id="IPR029058">
    <property type="entry name" value="AB_hydrolase_fold"/>
</dbReference>
<dbReference type="InterPro" id="IPR043423">
    <property type="entry name" value="FrsA"/>
</dbReference>
<dbReference type="InterPro" id="IPR010520">
    <property type="entry name" value="FrsA-like"/>
</dbReference>
<dbReference type="InterPro" id="IPR050261">
    <property type="entry name" value="FrsA_esterase"/>
</dbReference>
<dbReference type="NCBIfam" id="NF003460">
    <property type="entry name" value="PRK05077.1"/>
    <property type="match status" value="1"/>
</dbReference>
<dbReference type="PANTHER" id="PTHR22946">
    <property type="entry name" value="DIENELACTONE HYDROLASE DOMAIN-CONTAINING PROTEIN-RELATED"/>
    <property type="match status" value="1"/>
</dbReference>
<dbReference type="PANTHER" id="PTHR22946:SF4">
    <property type="entry name" value="ESTERASE FRSA"/>
    <property type="match status" value="1"/>
</dbReference>
<dbReference type="Pfam" id="PF06500">
    <property type="entry name" value="FrsA-like"/>
    <property type="match status" value="1"/>
</dbReference>
<dbReference type="SUPFAM" id="SSF53474">
    <property type="entry name" value="alpha/beta-Hydrolases"/>
    <property type="match status" value="1"/>
</dbReference>
<comment type="function">
    <text evidence="1">Catalyzes the hydrolysis of esters.</text>
</comment>
<comment type="catalytic activity">
    <reaction evidence="1">
        <text>a carboxylic ester + H2O = an alcohol + a carboxylate + H(+)</text>
        <dbReference type="Rhea" id="RHEA:21164"/>
        <dbReference type="ChEBI" id="CHEBI:15377"/>
        <dbReference type="ChEBI" id="CHEBI:15378"/>
        <dbReference type="ChEBI" id="CHEBI:29067"/>
        <dbReference type="ChEBI" id="CHEBI:30879"/>
        <dbReference type="ChEBI" id="CHEBI:33308"/>
        <dbReference type="EC" id="3.1.1.1"/>
    </reaction>
</comment>
<comment type="similarity">
    <text evidence="1">Belongs to the FrsA family.</text>
</comment>
<protein>
    <recommendedName>
        <fullName evidence="1">Esterase FrsA</fullName>
        <ecNumber evidence="1">3.1.1.1</ecNumber>
    </recommendedName>
</protein>
<gene>
    <name evidence="1" type="primary">frsA</name>
    <name type="ordered locus">YE3204</name>
</gene>
<accession>A1JNX9</accession>
<name>FRSA_YERE8</name>
<proteinExistence type="inferred from homology"/>
<evidence type="ECO:0000255" key="1">
    <source>
        <dbReference type="HAMAP-Rule" id="MF_01063"/>
    </source>
</evidence>
<keyword id="KW-0378">Hydrolase</keyword>
<keyword id="KW-0719">Serine esterase</keyword>
<sequence length="415" mass="46921">MAQANLSEILFKPKFKHPETSTLVRHAHCNQAMNVHSALDGDTTSHWYRMINRLIWTWRGVDPLEIEEVLSRIACSKAEHSDNELLDTVVGYRNGNWIYEWAHQGMQWQQKAMEEADPMNAGQYWLNAANLYSIAGYPHLKGDELAEQVEVLSNRAYEEAAKHLPYTLKELSFDISDGGTLTGFLHMPTIGSAPFPTVLMCGGLDTLQSDYHRLFRDYLAPKGIAMLTIDLPSVGASSKWKLTQDTSFLHQQVLQALPNIPWIDHLRVSVFGFRFGANVAVRLGYLEPQRVRAVACLGPIVHHLLCNADSQRKLPDMYMDVMASRLGMADAADEILRAEMNRYSLKTQGLLGRRCQTPMLAGFWENDPFSPKEEAKLICSSSADGKLLPISSTPLYDNFHRALLQTSQWLEDKMR</sequence>
<reference key="1">
    <citation type="journal article" date="2006" name="PLoS Genet.">
        <title>The complete genome sequence and comparative genome analysis of the high pathogenicity Yersinia enterocolitica strain 8081.</title>
        <authorList>
            <person name="Thomson N.R."/>
            <person name="Howard S."/>
            <person name="Wren B.W."/>
            <person name="Holden M.T.G."/>
            <person name="Crossman L."/>
            <person name="Challis G.L."/>
            <person name="Churcher C."/>
            <person name="Mungall K."/>
            <person name="Brooks K."/>
            <person name="Chillingworth T."/>
            <person name="Feltwell T."/>
            <person name="Abdellah Z."/>
            <person name="Hauser H."/>
            <person name="Jagels K."/>
            <person name="Maddison M."/>
            <person name="Moule S."/>
            <person name="Sanders M."/>
            <person name="Whitehead S."/>
            <person name="Quail M.A."/>
            <person name="Dougan G."/>
            <person name="Parkhill J."/>
            <person name="Prentice M.B."/>
        </authorList>
    </citation>
    <scope>NUCLEOTIDE SEQUENCE [LARGE SCALE GENOMIC DNA]</scope>
    <source>
        <strain>NCTC 13174 / 8081</strain>
    </source>
</reference>
<feature type="chain" id="PRO_1000064492" description="Esterase FrsA">
    <location>
        <begin position="1"/>
        <end position="415"/>
    </location>
</feature>
<organism>
    <name type="scientific">Yersinia enterocolitica serotype O:8 / biotype 1B (strain NCTC 13174 / 8081)</name>
    <dbReference type="NCBI Taxonomy" id="393305"/>
    <lineage>
        <taxon>Bacteria</taxon>
        <taxon>Pseudomonadati</taxon>
        <taxon>Pseudomonadota</taxon>
        <taxon>Gammaproteobacteria</taxon>
        <taxon>Enterobacterales</taxon>
        <taxon>Yersiniaceae</taxon>
        <taxon>Yersinia</taxon>
    </lineage>
</organism>